<keyword id="KW-0143">Chaperone</keyword>
<keyword id="KW-0963">Cytoplasm</keyword>
<keyword id="KW-0235">DNA replication</keyword>
<keyword id="KW-0479">Metal-binding</keyword>
<keyword id="KW-1185">Reference proteome</keyword>
<keyword id="KW-0677">Repeat</keyword>
<keyword id="KW-0346">Stress response</keyword>
<keyword id="KW-0862">Zinc</keyword>
<keyword id="KW-0863">Zinc-finger</keyword>
<evidence type="ECO:0000255" key="1">
    <source>
        <dbReference type="HAMAP-Rule" id="MF_01152"/>
    </source>
</evidence>
<dbReference type="EMBL" id="BX293980">
    <property type="protein sequence ID" value="CAE77231.1"/>
    <property type="molecule type" value="Genomic_DNA"/>
</dbReference>
<dbReference type="RefSeq" id="NP_975589.1">
    <property type="nucleotide sequence ID" value="NC_005364.2"/>
</dbReference>
<dbReference type="RefSeq" id="WP_011166785.1">
    <property type="nucleotide sequence ID" value="NC_005364.2"/>
</dbReference>
<dbReference type="SMR" id="Q6MT07"/>
<dbReference type="STRING" id="272632.MSC_0609"/>
<dbReference type="KEGG" id="mmy:MSC_0609"/>
<dbReference type="PATRIC" id="fig|272632.4.peg.656"/>
<dbReference type="eggNOG" id="COG0484">
    <property type="taxonomic scope" value="Bacteria"/>
</dbReference>
<dbReference type="HOGENOM" id="CLU_017633_0_7_14"/>
<dbReference type="Proteomes" id="UP000001016">
    <property type="component" value="Chromosome"/>
</dbReference>
<dbReference type="GO" id="GO:0005737">
    <property type="term" value="C:cytoplasm"/>
    <property type="evidence" value="ECO:0007669"/>
    <property type="project" value="UniProtKB-SubCell"/>
</dbReference>
<dbReference type="GO" id="GO:0005524">
    <property type="term" value="F:ATP binding"/>
    <property type="evidence" value="ECO:0007669"/>
    <property type="project" value="InterPro"/>
</dbReference>
<dbReference type="GO" id="GO:0031072">
    <property type="term" value="F:heat shock protein binding"/>
    <property type="evidence" value="ECO:0007669"/>
    <property type="project" value="InterPro"/>
</dbReference>
<dbReference type="GO" id="GO:0051082">
    <property type="term" value="F:unfolded protein binding"/>
    <property type="evidence" value="ECO:0007669"/>
    <property type="project" value="UniProtKB-UniRule"/>
</dbReference>
<dbReference type="GO" id="GO:0008270">
    <property type="term" value="F:zinc ion binding"/>
    <property type="evidence" value="ECO:0007669"/>
    <property type="project" value="UniProtKB-UniRule"/>
</dbReference>
<dbReference type="GO" id="GO:0051085">
    <property type="term" value="P:chaperone cofactor-dependent protein refolding"/>
    <property type="evidence" value="ECO:0007669"/>
    <property type="project" value="TreeGrafter"/>
</dbReference>
<dbReference type="GO" id="GO:0006260">
    <property type="term" value="P:DNA replication"/>
    <property type="evidence" value="ECO:0007669"/>
    <property type="project" value="UniProtKB-KW"/>
</dbReference>
<dbReference type="GO" id="GO:0042026">
    <property type="term" value="P:protein refolding"/>
    <property type="evidence" value="ECO:0007669"/>
    <property type="project" value="TreeGrafter"/>
</dbReference>
<dbReference type="GO" id="GO:0009408">
    <property type="term" value="P:response to heat"/>
    <property type="evidence" value="ECO:0007669"/>
    <property type="project" value="InterPro"/>
</dbReference>
<dbReference type="CDD" id="cd06257">
    <property type="entry name" value="DnaJ"/>
    <property type="match status" value="1"/>
</dbReference>
<dbReference type="CDD" id="cd10747">
    <property type="entry name" value="DnaJ_C"/>
    <property type="match status" value="1"/>
</dbReference>
<dbReference type="CDD" id="cd10719">
    <property type="entry name" value="DnaJ_zf"/>
    <property type="match status" value="1"/>
</dbReference>
<dbReference type="FunFam" id="2.60.260.20:FF:000013">
    <property type="entry name" value="DnaJ subfamily B member 11"/>
    <property type="match status" value="1"/>
</dbReference>
<dbReference type="FunFam" id="2.10.230.10:FF:000002">
    <property type="entry name" value="Molecular chaperone DnaJ"/>
    <property type="match status" value="1"/>
</dbReference>
<dbReference type="Gene3D" id="1.10.287.110">
    <property type="entry name" value="DnaJ domain"/>
    <property type="match status" value="1"/>
</dbReference>
<dbReference type="Gene3D" id="2.10.230.10">
    <property type="entry name" value="Heat shock protein DnaJ, cysteine-rich domain"/>
    <property type="match status" value="1"/>
</dbReference>
<dbReference type="Gene3D" id="2.60.260.20">
    <property type="entry name" value="Urease metallochaperone UreE, N-terminal domain"/>
    <property type="match status" value="2"/>
</dbReference>
<dbReference type="HAMAP" id="MF_01152">
    <property type="entry name" value="DnaJ"/>
    <property type="match status" value="1"/>
</dbReference>
<dbReference type="InterPro" id="IPR012724">
    <property type="entry name" value="DnaJ"/>
</dbReference>
<dbReference type="InterPro" id="IPR002939">
    <property type="entry name" value="DnaJ_C"/>
</dbReference>
<dbReference type="InterPro" id="IPR001623">
    <property type="entry name" value="DnaJ_domain"/>
</dbReference>
<dbReference type="InterPro" id="IPR008971">
    <property type="entry name" value="HSP40/DnaJ_pept-bd"/>
</dbReference>
<dbReference type="InterPro" id="IPR001305">
    <property type="entry name" value="HSP_DnaJ_Cys-rich_dom"/>
</dbReference>
<dbReference type="InterPro" id="IPR036410">
    <property type="entry name" value="HSP_DnaJ_Cys-rich_dom_sf"/>
</dbReference>
<dbReference type="InterPro" id="IPR036869">
    <property type="entry name" value="J_dom_sf"/>
</dbReference>
<dbReference type="NCBIfam" id="TIGR02349">
    <property type="entry name" value="DnaJ_bact"/>
    <property type="match status" value="1"/>
</dbReference>
<dbReference type="NCBIfam" id="NF010889">
    <property type="entry name" value="PRK14296.1"/>
    <property type="match status" value="1"/>
</dbReference>
<dbReference type="PANTHER" id="PTHR43096">
    <property type="entry name" value="DNAJ HOMOLOG 1, MITOCHONDRIAL-RELATED"/>
    <property type="match status" value="1"/>
</dbReference>
<dbReference type="PANTHER" id="PTHR43096:SF52">
    <property type="entry name" value="DNAJ HOMOLOG 1, MITOCHONDRIAL-RELATED"/>
    <property type="match status" value="1"/>
</dbReference>
<dbReference type="Pfam" id="PF00226">
    <property type="entry name" value="DnaJ"/>
    <property type="match status" value="1"/>
</dbReference>
<dbReference type="Pfam" id="PF01556">
    <property type="entry name" value="DnaJ_C"/>
    <property type="match status" value="1"/>
</dbReference>
<dbReference type="Pfam" id="PF00684">
    <property type="entry name" value="DnaJ_CXXCXGXG"/>
    <property type="match status" value="1"/>
</dbReference>
<dbReference type="PRINTS" id="PR00625">
    <property type="entry name" value="JDOMAIN"/>
</dbReference>
<dbReference type="SMART" id="SM00271">
    <property type="entry name" value="DnaJ"/>
    <property type="match status" value="1"/>
</dbReference>
<dbReference type="SUPFAM" id="SSF46565">
    <property type="entry name" value="Chaperone J-domain"/>
    <property type="match status" value="1"/>
</dbReference>
<dbReference type="SUPFAM" id="SSF57938">
    <property type="entry name" value="DnaJ/Hsp40 cysteine-rich domain"/>
    <property type="match status" value="1"/>
</dbReference>
<dbReference type="SUPFAM" id="SSF49493">
    <property type="entry name" value="HSP40/DnaJ peptide-binding domain"/>
    <property type="match status" value="2"/>
</dbReference>
<dbReference type="PROSITE" id="PS50076">
    <property type="entry name" value="DNAJ_2"/>
    <property type="match status" value="1"/>
</dbReference>
<dbReference type="PROSITE" id="PS51188">
    <property type="entry name" value="ZF_CR"/>
    <property type="match status" value="1"/>
</dbReference>
<protein>
    <recommendedName>
        <fullName evidence="1">Chaperone protein DnaJ</fullName>
    </recommendedName>
</protein>
<accession>Q6MT07</accession>
<sequence>MKKKDYYEVLGVSKTASEQEIRQAYRKLAKQYHPDLNKSPDAHDKMVEINEAADVLLDKDKRKQYDQFGHNAFDGSSGFSSNFADFEDLFSNMGSSGFSSFTNIFSDFFGSNKSDYQRSTKGQSVSVDIYLTFKELLFGVDKIIELDLLTNCSVCFGSGAESNSDISICNNCHGTGEVLIQKNMGFFQFQQSAKCNVCNGAGKIIKNKCKNCKGKGKYLERKKIEVNIPKGIRPNQQIKLSQKGHASINNGVNGDLIIDIYLKESKVFEIVNNNDILMTYNISYLDAILGNEIIIKTLDGDIKYKLPKSINSNEFIIINNKGLYKSINKDKRGDLIIKVNIVVPKNLNKKEKELIEQIYEQTSFNPENNIDQ</sequence>
<reference key="1">
    <citation type="journal article" date="2004" name="Genome Res.">
        <title>The genome sequence of Mycoplasma mycoides subsp. mycoides SC type strain PG1T, the causative agent of contagious bovine pleuropneumonia (CBPP).</title>
        <authorList>
            <person name="Westberg J."/>
            <person name="Persson A."/>
            <person name="Holmberg A."/>
            <person name="Goesmann A."/>
            <person name="Lundeberg J."/>
            <person name="Johansson K.-E."/>
            <person name="Pettersson B."/>
            <person name="Uhlen M."/>
        </authorList>
    </citation>
    <scope>NUCLEOTIDE SEQUENCE [LARGE SCALE GENOMIC DNA]</scope>
    <source>
        <strain>CCUG 32753 / NCTC 10114 / PG1</strain>
    </source>
</reference>
<name>DNAJ_MYCMS</name>
<comment type="function">
    <text evidence="1">Participates actively in the response to hyperosmotic and heat shock by preventing the aggregation of stress-denatured proteins and by disaggregating proteins, also in an autonomous, DnaK-independent fashion. Unfolded proteins bind initially to DnaJ; upon interaction with the DnaJ-bound protein, DnaK hydrolyzes its bound ATP, resulting in the formation of a stable complex. GrpE releases ADP from DnaK; ATP binding to DnaK triggers the release of the substrate protein, thus completing the reaction cycle. Several rounds of ATP-dependent interactions between DnaJ, DnaK and GrpE are required for fully efficient folding. Also involved, together with DnaK and GrpE, in the DNA replication of plasmids through activation of initiation proteins.</text>
</comment>
<comment type="cofactor">
    <cofactor evidence="1">
        <name>Zn(2+)</name>
        <dbReference type="ChEBI" id="CHEBI:29105"/>
    </cofactor>
    <text evidence="1">Binds 2 Zn(2+) ions per monomer.</text>
</comment>
<comment type="subunit">
    <text evidence="1">Homodimer.</text>
</comment>
<comment type="subcellular location">
    <subcellularLocation>
        <location evidence="1">Cytoplasm</location>
    </subcellularLocation>
</comment>
<comment type="domain">
    <text evidence="1">The J domain is necessary and sufficient to stimulate DnaK ATPase activity. Zinc center 1 plays an important role in the autonomous, DnaK-independent chaperone activity of DnaJ. Zinc center 2 is essential for interaction with DnaK and for DnaJ activity.</text>
</comment>
<comment type="similarity">
    <text evidence="1">Belongs to the DnaJ family.</text>
</comment>
<feature type="chain" id="PRO_0000070829" description="Chaperone protein DnaJ">
    <location>
        <begin position="1"/>
        <end position="372"/>
    </location>
</feature>
<feature type="domain" description="J" evidence="1">
    <location>
        <begin position="5"/>
        <end position="69"/>
    </location>
</feature>
<feature type="repeat" description="CXXCXGXG motif">
    <location>
        <begin position="152"/>
        <end position="159"/>
    </location>
</feature>
<feature type="repeat" description="CXXCXGXG motif">
    <location>
        <begin position="169"/>
        <end position="176"/>
    </location>
</feature>
<feature type="repeat" description="CXXCXGXG motif">
    <location>
        <begin position="195"/>
        <end position="202"/>
    </location>
</feature>
<feature type="repeat" description="CXXCXGXG motif">
    <location>
        <begin position="209"/>
        <end position="216"/>
    </location>
</feature>
<feature type="zinc finger region" description="CR-type" evidence="1">
    <location>
        <begin position="139"/>
        <end position="221"/>
    </location>
</feature>
<feature type="binding site" evidence="1">
    <location>
        <position position="152"/>
    </location>
    <ligand>
        <name>Zn(2+)</name>
        <dbReference type="ChEBI" id="CHEBI:29105"/>
        <label>1</label>
    </ligand>
</feature>
<feature type="binding site" evidence="1">
    <location>
        <position position="155"/>
    </location>
    <ligand>
        <name>Zn(2+)</name>
        <dbReference type="ChEBI" id="CHEBI:29105"/>
        <label>1</label>
    </ligand>
</feature>
<feature type="binding site" evidence="1">
    <location>
        <position position="169"/>
    </location>
    <ligand>
        <name>Zn(2+)</name>
        <dbReference type="ChEBI" id="CHEBI:29105"/>
        <label>2</label>
    </ligand>
</feature>
<feature type="binding site" evidence="1">
    <location>
        <position position="172"/>
    </location>
    <ligand>
        <name>Zn(2+)</name>
        <dbReference type="ChEBI" id="CHEBI:29105"/>
        <label>2</label>
    </ligand>
</feature>
<feature type="binding site" evidence="1">
    <location>
        <position position="195"/>
    </location>
    <ligand>
        <name>Zn(2+)</name>
        <dbReference type="ChEBI" id="CHEBI:29105"/>
        <label>2</label>
    </ligand>
</feature>
<feature type="binding site" evidence="1">
    <location>
        <position position="198"/>
    </location>
    <ligand>
        <name>Zn(2+)</name>
        <dbReference type="ChEBI" id="CHEBI:29105"/>
        <label>2</label>
    </ligand>
</feature>
<feature type="binding site" evidence="1">
    <location>
        <position position="209"/>
    </location>
    <ligand>
        <name>Zn(2+)</name>
        <dbReference type="ChEBI" id="CHEBI:29105"/>
        <label>1</label>
    </ligand>
</feature>
<feature type="binding site" evidence="1">
    <location>
        <position position="212"/>
    </location>
    <ligand>
        <name>Zn(2+)</name>
        <dbReference type="ChEBI" id="CHEBI:29105"/>
        <label>1</label>
    </ligand>
</feature>
<organism>
    <name type="scientific">Mycoplasma mycoides subsp. mycoides SC (strain CCUG 32753 / NCTC 10114 / PG1)</name>
    <dbReference type="NCBI Taxonomy" id="272632"/>
    <lineage>
        <taxon>Bacteria</taxon>
        <taxon>Bacillati</taxon>
        <taxon>Mycoplasmatota</taxon>
        <taxon>Mollicutes</taxon>
        <taxon>Mycoplasmataceae</taxon>
        <taxon>Mycoplasma</taxon>
    </lineage>
</organism>
<proteinExistence type="inferred from homology"/>
<gene>
    <name evidence="1" type="primary">dnaJ</name>
    <name type="ordered locus">MSC_0609</name>
</gene>